<name>Y4764_RHOPT</name>
<evidence type="ECO:0000255" key="1">
    <source>
        <dbReference type="HAMAP-Rule" id="MF_01204"/>
    </source>
</evidence>
<dbReference type="EC" id="1.-.-.-" evidence="1"/>
<dbReference type="EMBL" id="CP001096">
    <property type="protein sequence ID" value="ACF03255.1"/>
    <property type="molecule type" value="Genomic_DNA"/>
</dbReference>
<dbReference type="RefSeq" id="WP_012497504.1">
    <property type="nucleotide sequence ID" value="NC_011004.1"/>
</dbReference>
<dbReference type="SMR" id="B3Q6V6"/>
<dbReference type="KEGG" id="rpt:Rpal_4764"/>
<dbReference type="HOGENOM" id="CLU_084441_0_0_5"/>
<dbReference type="OrthoDB" id="9784375at2"/>
<dbReference type="Proteomes" id="UP000001725">
    <property type="component" value="Chromosome"/>
</dbReference>
<dbReference type="GO" id="GO:0016491">
    <property type="term" value="F:oxidoreductase activity"/>
    <property type="evidence" value="ECO:0007669"/>
    <property type="project" value="UniProtKB-UniRule"/>
</dbReference>
<dbReference type="CDD" id="cd02148">
    <property type="entry name" value="RutE-like"/>
    <property type="match status" value="1"/>
</dbReference>
<dbReference type="Gene3D" id="3.40.109.10">
    <property type="entry name" value="NADH Oxidase"/>
    <property type="match status" value="1"/>
</dbReference>
<dbReference type="HAMAP" id="MF_01204">
    <property type="entry name" value="Oxidoreductase_RutE_HadB"/>
    <property type="match status" value="1"/>
</dbReference>
<dbReference type="InterPro" id="IPR029479">
    <property type="entry name" value="Nitroreductase"/>
</dbReference>
<dbReference type="InterPro" id="IPR000415">
    <property type="entry name" value="Nitroreductase-like"/>
</dbReference>
<dbReference type="InterPro" id="IPR050461">
    <property type="entry name" value="Nitroreductase_HadB/RutE"/>
</dbReference>
<dbReference type="InterPro" id="IPR023936">
    <property type="entry name" value="RutE-like"/>
</dbReference>
<dbReference type="NCBIfam" id="NF003768">
    <property type="entry name" value="PRK05365.1"/>
    <property type="match status" value="1"/>
</dbReference>
<dbReference type="PANTHER" id="PTHR43543">
    <property type="entry name" value="MALONIC SEMIALDEHYDE REDUCTASE RUTE-RELATED"/>
    <property type="match status" value="1"/>
</dbReference>
<dbReference type="PANTHER" id="PTHR43543:SF1">
    <property type="entry name" value="MALONIC SEMIALDEHYDE REDUCTASE RUTE-RELATED"/>
    <property type="match status" value="1"/>
</dbReference>
<dbReference type="Pfam" id="PF00881">
    <property type="entry name" value="Nitroreductase"/>
    <property type="match status" value="1"/>
</dbReference>
<dbReference type="SUPFAM" id="SSF55469">
    <property type="entry name" value="FMN-dependent nitroreductase-like"/>
    <property type="match status" value="1"/>
</dbReference>
<protein>
    <recommendedName>
        <fullName evidence="1">Putative NADH dehydrogenase/NAD(P)H nitroreductase Rpal_4764</fullName>
        <ecNumber evidence="1">1.-.-.-</ecNumber>
    </recommendedName>
</protein>
<sequence>MSSTLPDPHLDQLFVQARTHNAWTSKPVTDDTIHALYDLLKWAPTAANSNPGRFVFVRSAEAKARLLKSVAPGNVDKVKAAPCCVIVAYDTEFHDLLPQLFPARDMRSGFVGKPELITETAKRNSALQGAYLILAARALGLDAGPMSGFDHVALDAEFFPDGRWKSNFLCNIGYGDAEKLFPRNPRLAFEDACRVL</sequence>
<proteinExistence type="inferred from homology"/>
<keyword id="KW-0285">Flavoprotein</keyword>
<keyword id="KW-0288">FMN</keyword>
<keyword id="KW-0520">NAD</keyword>
<keyword id="KW-0521">NADP</keyword>
<keyword id="KW-0560">Oxidoreductase</keyword>
<feature type="chain" id="PRO_1000138701" description="Putative NADH dehydrogenase/NAD(P)H nitroreductase Rpal_4764">
    <location>
        <begin position="1"/>
        <end position="196"/>
    </location>
</feature>
<comment type="cofactor">
    <cofactor evidence="1">
        <name>FMN</name>
        <dbReference type="ChEBI" id="CHEBI:58210"/>
    </cofactor>
</comment>
<comment type="similarity">
    <text evidence="1">Belongs to the nitroreductase family. HadB/RutE subfamily.</text>
</comment>
<gene>
    <name type="ordered locus">Rpal_4764</name>
</gene>
<accession>B3Q6V6</accession>
<reference key="1">
    <citation type="submission" date="2008-05" db="EMBL/GenBank/DDBJ databases">
        <title>Complete sequence of Rhodopseudomonas palustris TIE-1.</title>
        <authorList>
            <consortium name="US DOE Joint Genome Institute"/>
            <person name="Lucas S."/>
            <person name="Copeland A."/>
            <person name="Lapidus A."/>
            <person name="Glavina del Rio T."/>
            <person name="Dalin E."/>
            <person name="Tice H."/>
            <person name="Pitluck S."/>
            <person name="Chain P."/>
            <person name="Malfatti S."/>
            <person name="Shin M."/>
            <person name="Vergez L."/>
            <person name="Lang D."/>
            <person name="Schmutz J."/>
            <person name="Larimer F."/>
            <person name="Land M."/>
            <person name="Hauser L."/>
            <person name="Kyrpides N."/>
            <person name="Mikhailova N."/>
            <person name="Emerson D."/>
            <person name="Newman D.K."/>
            <person name="Roden E."/>
            <person name="Richardson P."/>
        </authorList>
    </citation>
    <scope>NUCLEOTIDE SEQUENCE [LARGE SCALE GENOMIC DNA]</scope>
    <source>
        <strain>TIE-1</strain>
    </source>
</reference>
<organism>
    <name type="scientific">Rhodopseudomonas palustris (strain TIE-1)</name>
    <dbReference type="NCBI Taxonomy" id="395960"/>
    <lineage>
        <taxon>Bacteria</taxon>
        <taxon>Pseudomonadati</taxon>
        <taxon>Pseudomonadota</taxon>
        <taxon>Alphaproteobacteria</taxon>
        <taxon>Hyphomicrobiales</taxon>
        <taxon>Nitrobacteraceae</taxon>
        <taxon>Rhodopseudomonas</taxon>
    </lineage>
</organism>